<comment type="function">
    <text evidence="1">Binds to 23S rRNA. Forms part of two intersubunit bridges in the 70S ribosome.</text>
</comment>
<comment type="subunit">
    <text evidence="1">Part of the 50S ribosomal subunit. Forms a cluster with proteins L3 and L19. In the 70S ribosome, L14 and L19 interact and together make contacts with the 16S rRNA in bridges B5 and B8.</text>
</comment>
<comment type="similarity">
    <text evidence="1">Belongs to the universal ribosomal protein uL14 family.</text>
</comment>
<protein>
    <recommendedName>
        <fullName evidence="1">Large ribosomal subunit protein uL14</fullName>
    </recommendedName>
    <alternativeName>
        <fullName evidence="2">50S ribosomal protein L14</fullName>
    </alternativeName>
</protein>
<reference key="1">
    <citation type="submission" date="2003-10" db="EMBL/GenBank/DDBJ databases">
        <title>The complete genome sequence of the alkaliphilic Bacillus clausii KSM-K16.</title>
        <authorList>
            <person name="Takaki Y."/>
            <person name="Kageyama Y."/>
            <person name="Shimamura S."/>
            <person name="Suzuki H."/>
            <person name="Nishi S."/>
            <person name="Hatada Y."/>
            <person name="Kawai S."/>
            <person name="Ito S."/>
            <person name="Horikoshi K."/>
        </authorList>
    </citation>
    <scope>NUCLEOTIDE SEQUENCE [LARGE SCALE GENOMIC DNA]</scope>
    <source>
        <strain>KSM-K16</strain>
    </source>
</reference>
<evidence type="ECO:0000255" key="1">
    <source>
        <dbReference type="HAMAP-Rule" id="MF_01367"/>
    </source>
</evidence>
<evidence type="ECO:0000305" key="2"/>
<feature type="chain" id="PRO_1000055518" description="Large ribosomal subunit protein uL14">
    <location>
        <begin position="1"/>
        <end position="122"/>
    </location>
</feature>
<organism>
    <name type="scientific">Shouchella clausii (strain KSM-K16)</name>
    <name type="common">Alkalihalobacillus clausii</name>
    <dbReference type="NCBI Taxonomy" id="66692"/>
    <lineage>
        <taxon>Bacteria</taxon>
        <taxon>Bacillati</taxon>
        <taxon>Bacillota</taxon>
        <taxon>Bacilli</taxon>
        <taxon>Bacillales</taxon>
        <taxon>Bacillaceae</taxon>
        <taxon>Shouchella</taxon>
    </lineage>
</organism>
<gene>
    <name evidence="1" type="primary">rplN</name>
    <name type="ordered locus">ABC0160</name>
</gene>
<sequence length="122" mass="13163">MIQQESRLKVADNSGAREVLCIKVLGGSGRKIANIGDVIVCSVKEATPGGVVKKGDVVKAVIVRSKSGVRRNDGSYIKFDENAAVIVRDDKSPRGTRIFGPVARELRDNQFMKIVSLAPEVL</sequence>
<name>RL14_SHOC1</name>
<keyword id="KW-1185">Reference proteome</keyword>
<keyword id="KW-0687">Ribonucleoprotein</keyword>
<keyword id="KW-0689">Ribosomal protein</keyword>
<keyword id="KW-0694">RNA-binding</keyword>
<keyword id="KW-0699">rRNA-binding</keyword>
<accession>Q5WLQ2</accession>
<proteinExistence type="inferred from homology"/>
<dbReference type="EMBL" id="AP006627">
    <property type="protein sequence ID" value="BAD62703.1"/>
    <property type="molecule type" value="Genomic_DNA"/>
</dbReference>
<dbReference type="RefSeq" id="WP_011245024.1">
    <property type="nucleotide sequence ID" value="NC_006582.1"/>
</dbReference>
<dbReference type="SMR" id="Q5WLQ2"/>
<dbReference type="STRING" id="66692.ABC0160"/>
<dbReference type="GeneID" id="86924196"/>
<dbReference type="KEGG" id="bcl:ABC0160"/>
<dbReference type="eggNOG" id="COG0093">
    <property type="taxonomic scope" value="Bacteria"/>
</dbReference>
<dbReference type="HOGENOM" id="CLU_095071_2_1_9"/>
<dbReference type="OrthoDB" id="9806379at2"/>
<dbReference type="Proteomes" id="UP000001168">
    <property type="component" value="Chromosome"/>
</dbReference>
<dbReference type="GO" id="GO:0022625">
    <property type="term" value="C:cytosolic large ribosomal subunit"/>
    <property type="evidence" value="ECO:0007669"/>
    <property type="project" value="TreeGrafter"/>
</dbReference>
<dbReference type="GO" id="GO:0070180">
    <property type="term" value="F:large ribosomal subunit rRNA binding"/>
    <property type="evidence" value="ECO:0007669"/>
    <property type="project" value="TreeGrafter"/>
</dbReference>
<dbReference type="GO" id="GO:0003735">
    <property type="term" value="F:structural constituent of ribosome"/>
    <property type="evidence" value="ECO:0007669"/>
    <property type="project" value="InterPro"/>
</dbReference>
<dbReference type="GO" id="GO:0006412">
    <property type="term" value="P:translation"/>
    <property type="evidence" value="ECO:0007669"/>
    <property type="project" value="UniProtKB-UniRule"/>
</dbReference>
<dbReference type="CDD" id="cd00337">
    <property type="entry name" value="Ribosomal_uL14"/>
    <property type="match status" value="1"/>
</dbReference>
<dbReference type="FunFam" id="2.40.150.20:FF:000001">
    <property type="entry name" value="50S ribosomal protein L14"/>
    <property type="match status" value="1"/>
</dbReference>
<dbReference type="Gene3D" id="2.40.150.20">
    <property type="entry name" value="Ribosomal protein L14"/>
    <property type="match status" value="1"/>
</dbReference>
<dbReference type="HAMAP" id="MF_01367">
    <property type="entry name" value="Ribosomal_uL14"/>
    <property type="match status" value="1"/>
</dbReference>
<dbReference type="InterPro" id="IPR000218">
    <property type="entry name" value="Ribosomal_uL14"/>
</dbReference>
<dbReference type="InterPro" id="IPR005745">
    <property type="entry name" value="Ribosomal_uL14_bac-type"/>
</dbReference>
<dbReference type="InterPro" id="IPR019972">
    <property type="entry name" value="Ribosomal_uL14_CS"/>
</dbReference>
<dbReference type="InterPro" id="IPR036853">
    <property type="entry name" value="Ribosomal_uL14_sf"/>
</dbReference>
<dbReference type="NCBIfam" id="TIGR01067">
    <property type="entry name" value="rplN_bact"/>
    <property type="match status" value="1"/>
</dbReference>
<dbReference type="PANTHER" id="PTHR11761">
    <property type="entry name" value="50S/60S RIBOSOMAL PROTEIN L14/L23"/>
    <property type="match status" value="1"/>
</dbReference>
<dbReference type="PANTHER" id="PTHR11761:SF3">
    <property type="entry name" value="LARGE RIBOSOMAL SUBUNIT PROTEIN UL14M"/>
    <property type="match status" value="1"/>
</dbReference>
<dbReference type="Pfam" id="PF00238">
    <property type="entry name" value="Ribosomal_L14"/>
    <property type="match status" value="1"/>
</dbReference>
<dbReference type="SMART" id="SM01374">
    <property type="entry name" value="Ribosomal_L14"/>
    <property type="match status" value="1"/>
</dbReference>
<dbReference type="SUPFAM" id="SSF50193">
    <property type="entry name" value="Ribosomal protein L14"/>
    <property type="match status" value="1"/>
</dbReference>
<dbReference type="PROSITE" id="PS00049">
    <property type="entry name" value="RIBOSOMAL_L14"/>
    <property type="match status" value="1"/>
</dbReference>